<sequence length="275" mass="30684">MTLQQQIIKALGAKPQINAEEEIRRSVDFLKSYLQTYPFIKSLVLGISGGQDSTLAGKLCQMAINELRQETGNESLQFIAVRLPYGVQADEQDCQDAIAFIQPDRVLTVNIKGAVLASEQALREACIELSDFVRGNEKARERMKAQYSIAGMTSGVVVGTDHAAEAITGFFTKYGDGGTDINPLYRLNKRQGKQLLAALGCPEHLYKKAPTADLEDDRPSLPDEVALGVTYDNIDDYLEGKNVPQQVARTIENWYLKTEHKRRPPITVFDDFWKK</sequence>
<accession>Q8XDZ9</accession>
<evidence type="ECO:0000255" key="1">
    <source>
        <dbReference type="HAMAP-Rule" id="MF_00193"/>
    </source>
</evidence>
<proteinExistence type="inferred from homology"/>
<feature type="chain" id="PRO_0000152169" description="NH(3)-dependent NAD(+) synthetase">
    <location>
        <begin position="1"/>
        <end position="275"/>
    </location>
</feature>
<feature type="binding site" evidence="1">
    <location>
        <begin position="46"/>
        <end position="53"/>
    </location>
    <ligand>
        <name>ATP</name>
        <dbReference type="ChEBI" id="CHEBI:30616"/>
    </ligand>
</feature>
<feature type="binding site" evidence="1">
    <location>
        <position position="52"/>
    </location>
    <ligand>
        <name>Mg(2+)</name>
        <dbReference type="ChEBI" id="CHEBI:18420"/>
    </ligand>
</feature>
<feature type="binding site" evidence="1">
    <location>
        <position position="140"/>
    </location>
    <ligand>
        <name>deamido-NAD(+)</name>
        <dbReference type="ChEBI" id="CHEBI:58437"/>
    </ligand>
</feature>
<feature type="binding site" evidence="1">
    <location>
        <position position="160"/>
    </location>
    <ligand>
        <name>ATP</name>
        <dbReference type="ChEBI" id="CHEBI:30616"/>
    </ligand>
</feature>
<feature type="binding site" evidence="1">
    <location>
        <position position="165"/>
    </location>
    <ligand>
        <name>Mg(2+)</name>
        <dbReference type="ChEBI" id="CHEBI:18420"/>
    </ligand>
</feature>
<feature type="binding site" evidence="1">
    <location>
        <position position="173"/>
    </location>
    <ligand>
        <name>deamido-NAD(+)</name>
        <dbReference type="ChEBI" id="CHEBI:58437"/>
    </ligand>
</feature>
<feature type="binding site" evidence="1">
    <location>
        <position position="180"/>
    </location>
    <ligand>
        <name>deamido-NAD(+)</name>
        <dbReference type="ChEBI" id="CHEBI:58437"/>
    </ligand>
</feature>
<feature type="binding site" evidence="1">
    <location>
        <position position="189"/>
    </location>
    <ligand>
        <name>ATP</name>
        <dbReference type="ChEBI" id="CHEBI:30616"/>
    </ligand>
</feature>
<feature type="binding site" evidence="1">
    <location>
        <position position="211"/>
    </location>
    <ligand>
        <name>ATP</name>
        <dbReference type="ChEBI" id="CHEBI:30616"/>
    </ligand>
</feature>
<feature type="binding site" evidence="1">
    <location>
        <begin position="260"/>
        <end position="261"/>
    </location>
    <ligand>
        <name>deamido-NAD(+)</name>
        <dbReference type="ChEBI" id="CHEBI:58437"/>
    </ligand>
</feature>
<dbReference type="EC" id="6.3.1.5" evidence="1"/>
<dbReference type="EMBL" id="AE005174">
    <property type="protein sequence ID" value="AAG56726.1"/>
    <property type="molecule type" value="Genomic_DNA"/>
</dbReference>
<dbReference type="EMBL" id="BA000007">
    <property type="protein sequence ID" value="BAB35869.1"/>
    <property type="molecule type" value="Genomic_DNA"/>
</dbReference>
<dbReference type="PIR" id="B85783">
    <property type="entry name" value="B85783"/>
</dbReference>
<dbReference type="PIR" id="F90934">
    <property type="entry name" value="F90934"/>
</dbReference>
<dbReference type="RefSeq" id="NP_310473.1">
    <property type="nucleotide sequence ID" value="NC_002695.1"/>
</dbReference>
<dbReference type="RefSeq" id="WP_000175032.1">
    <property type="nucleotide sequence ID" value="NZ_VOAI01000007.1"/>
</dbReference>
<dbReference type="SMR" id="Q8XDZ9"/>
<dbReference type="STRING" id="155864.Z2770"/>
<dbReference type="GeneID" id="916936"/>
<dbReference type="KEGG" id="ece:Z2770"/>
<dbReference type="KEGG" id="ecs:ECs_2446"/>
<dbReference type="PATRIC" id="fig|386585.9.peg.2560"/>
<dbReference type="eggNOG" id="COG0171">
    <property type="taxonomic scope" value="Bacteria"/>
</dbReference>
<dbReference type="HOGENOM" id="CLU_059327_3_0_6"/>
<dbReference type="OMA" id="FCARLRM"/>
<dbReference type="UniPathway" id="UPA00253">
    <property type="reaction ID" value="UER00333"/>
</dbReference>
<dbReference type="Proteomes" id="UP000000558">
    <property type="component" value="Chromosome"/>
</dbReference>
<dbReference type="Proteomes" id="UP000002519">
    <property type="component" value="Chromosome"/>
</dbReference>
<dbReference type="GO" id="GO:0005737">
    <property type="term" value="C:cytoplasm"/>
    <property type="evidence" value="ECO:0007669"/>
    <property type="project" value="InterPro"/>
</dbReference>
<dbReference type="GO" id="GO:0005524">
    <property type="term" value="F:ATP binding"/>
    <property type="evidence" value="ECO:0007669"/>
    <property type="project" value="UniProtKB-UniRule"/>
</dbReference>
<dbReference type="GO" id="GO:0004359">
    <property type="term" value="F:glutaminase activity"/>
    <property type="evidence" value="ECO:0007669"/>
    <property type="project" value="InterPro"/>
</dbReference>
<dbReference type="GO" id="GO:0046872">
    <property type="term" value="F:metal ion binding"/>
    <property type="evidence" value="ECO:0007669"/>
    <property type="project" value="UniProtKB-KW"/>
</dbReference>
<dbReference type="GO" id="GO:0003952">
    <property type="term" value="F:NAD+ synthase (glutamine-hydrolyzing) activity"/>
    <property type="evidence" value="ECO:0007669"/>
    <property type="project" value="InterPro"/>
</dbReference>
<dbReference type="GO" id="GO:0008795">
    <property type="term" value="F:NAD+ synthase activity"/>
    <property type="evidence" value="ECO:0007669"/>
    <property type="project" value="UniProtKB-UniRule"/>
</dbReference>
<dbReference type="GO" id="GO:0009435">
    <property type="term" value="P:NAD biosynthetic process"/>
    <property type="evidence" value="ECO:0007669"/>
    <property type="project" value="UniProtKB-UniRule"/>
</dbReference>
<dbReference type="CDD" id="cd00553">
    <property type="entry name" value="NAD_synthase"/>
    <property type="match status" value="1"/>
</dbReference>
<dbReference type="FunFam" id="3.40.50.620:FF:000015">
    <property type="entry name" value="NH(3)-dependent NAD(+) synthetase"/>
    <property type="match status" value="1"/>
</dbReference>
<dbReference type="Gene3D" id="3.40.50.620">
    <property type="entry name" value="HUPs"/>
    <property type="match status" value="1"/>
</dbReference>
<dbReference type="HAMAP" id="MF_00193">
    <property type="entry name" value="NadE_ammonia_dep"/>
    <property type="match status" value="1"/>
</dbReference>
<dbReference type="InterPro" id="IPR022310">
    <property type="entry name" value="NAD/GMP_synthase"/>
</dbReference>
<dbReference type="InterPro" id="IPR003694">
    <property type="entry name" value="NAD_synthase"/>
</dbReference>
<dbReference type="InterPro" id="IPR022926">
    <property type="entry name" value="NH(3)-dep_NAD(+)_synth"/>
</dbReference>
<dbReference type="InterPro" id="IPR014729">
    <property type="entry name" value="Rossmann-like_a/b/a_fold"/>
</dbReference>
<dbReference type="NCBIfam" id="TIGR00552">
    <property type="entry name" value="nadE"/>
    <property type="match status" value="1"/>
</dbReference>
<dbReference type="NCBIfam" id="NF001979">
    <property type="entry name" value="PRK00768.1"/>
    <property type="match status" value="1"/>
</dbReference>
<dbReference type="PANTHER" id="PTHR23090">
    <property type="entry name" value="NH 3 /GLUTAMINE-DEPENDENT NAD + SYNTHETASE"/>
    <property type="match status" value="1"/>
</dbReference>
<dbReference type="PANTHER" id="PTHR23090:SF7">
    <property type="entry name" value="NH(3)-DEPENDENT NAD(+) SYNTHETASE"/>
    <property type="match status" value="1"/>
</dbReference>
<dbReference type="Pfam" id="PF02540">
    <property type="entry name" value="NAD_synthase"/>
    <property type="match status" value="1"/>
</dbReference>
<dbReference type="SUPFAM" id="SSF52402">
    <property type="entry name" value="Adenine nucleotide alpha hydrolases-like"/>
    <property type="match status" value="1"/>
</dbReference>
<keyword id="KW-0067">ATP-binding</keyword>
<keyword id="KW-0436">Ligase</keyword>
<keyword id="KW-0460">Magnesium</keyword>
<keyword id="KW-0479">Metal-binding</keyword>
<keyword id="KW-0520">NAD</keyword>
<keyword id="KW-0547">Nucleotide-binding</keyword>
<keyword id="KW-1185">Reference proteome</keyword>
<organism>
    <name type="scientific">Escherichia coli O157:H7</name>
    <dbReference type="NCBI Taxonomy" id="83334"/>
    <lineage>
        <taxon>Bacteria</taxon>
        <taxon>Pseudomonadati</taxon>
        <taxon>Pseudomonadota</taxon>
        <taxon>Gammaproteobacteria</taxon>
        <taxon>Enterobacterales</taxon>
        <taxon>Enterobacteriaceae</taxon>
        <taxon>Escherichia</taxon>
    </lineage>
</organism>
<comment type="function">
    <text evidence="1">Catalyzes the ATP-dependent amidation of deamido-NAD to form NAD. Uses ammonia as a nitrogen source.</text>
</comment>
<comment type="catalytic activity">
    <reaction evidence="1">
        <text>deamido-NAD(+) + NH4(+) + ATP = AMP + diphosphate + NAD(+) + H(+)</text>
        <dbReference type="Rhea" id="RHEA:21188"/>
        <dbReference type="ChEBI" id="CHEBI:15378"/>
        <dbReference type="ChEBI" id="CHEBI:28938"/>
        <dbReference type="ChEBI" id="CHEBI:30616"/>
        <dbReference type="ChEBI" id="CHEBI:33019"/>
        <dbReference type="ChEBI" id="CHEBI:57540"/>
        <dbReference type="ChEBI" id="CHEBI:58437"/>
        <dbReference type="ChEBI" id="CHEBI:456215"/>
        <dbReference type="EC" id="6.3.1.5"/>
    </reaction>
</comment>
<comment type="pathway">
    <text evidence="1">Cofactor biosynthesis; NAD(+) biosynthesis; NAD(+) from deamido-NAD(+) (ammonia route): step 1/1.</text>
</comment>
<comment type="subunit">
    <text evidence="1">Homodimer.</text>
</comment>
<comment type="similarity">
    <text evidence="1">Belongs to the NAD synthetase family.</text>
</comment>
<gene>
    <name evidence="1" type="primary">nadE</name>
    <name type="ordered locus">Z2770</name>
    <name type="ordered locus">ECs2446</name>
</gene>
<reference key="1">
    <citation type="journal article" date="2001" name="Nature">
        <title>Genome sequence of enterohaemorrhagic Escherichia coli O157:H7.</title>
        <authorList>
            <person name="Perna N.T."/>
            <person name="Plunkett G. III"/>
            <person name="Burland V."/>
            <person name="Mau B."/>
            <person name="Glasner J.D."/>
            <person name="Rose D.J."/>
            <person name="Mayhew G.F."/>
            <person name="Evans P.S."/>
            <person name="Gregor J."/>
            <person name="Kirkpatrick H.A."/>
            <person name="Posfai G."/>
            <person name="Hackett J."/>
            <person name="Klink S."/>
            <person name="Boutin A."/>
            <person name="Shao Y."/>
            <person name="Miller L."/>
            <person name="Grotbeck E.J."/>
            <person name="Davis N.W."/>
            <person name="Lim A."/>
            <person name="Dimalanta E.T."/>
            <person name="Potamousis K."/>
            <person name="Apodaca J."/>
            <person name="Anantharaman T.S."/>
            <person name="Lin J."/>
            <person name="Yen G."/>
            <person name="Schwartz D.C."/>
            <person name="Welch R.A."/>
            <person name="Blattner F.R."/>
        </authorList>
    </citation>
    <scope>NUCLEOTIDE SEQUENCE [LARGE SCALE GENOMIC DNA]</scope>
    <source>
        <strain>O157:H7 / EDL933 / ATCC 700927 / EHEC</strain>
    </source>
</reference>
<reference key="2">
    <citation type="journal article" date="2001" name="DNA Res.">
        <title>Complete genome sequence of enterohemorrhagic Escherichia coli O157:H7 and genomic comparison with a laboratory strain K-12.</title>
        <authorList>
            <person name="Hayashi T."/>
            <person name="Makino K."/>
            <person name="Ohnishi M."/>
            <person name="Kurokawa K."/>
            <person name="Ishii K."/>
            <person name="Yokoyama K."/>
            <person name="Han C.-G."/>
            <person name="Ohtsubo E."/>
            <person name="Nakayama K."/>
            <person name="Murata T."/>
            <person name="Tanaka M."/>
            <person name="Tobe T."/>
            <person name="Iida T."/>
            <person name="Takami H."/>
            <person name="Honda T."/>
            <person name="Sasakawa C."/>
            <person name="Ogasawara N."/>
            <person name="Yasunaga T."/>
            <person name="Kuhara S."/>
            <person name="Shiba T."/>
            <person name="Hattori M."/>
            <person name="Shinagawa H."/>
        </authorList>
    </citation>
    <scope>NUCLEOTIDE SEQUENCE [LARGE SCALE GENOMIC DNA]</scope>
    <source>
        <strain>O157:H7 / Sakai / RIMD 0509952 / EHEC</strain>
    </source>
</reference>
<protein>
    <recommendedName>
        <fullName evidence="1">NH(3)-dependent NAD(+) synthetase</fullName>
        <ecNumber evidence="1">6.3.1.5</ecNumber>
    </recommendedName>
</protein>
<name>NADE_ECO57</name>